<proteinExistence type="inferred from homology"/>
<dbReference type="EMBL" id="AM939782">
    <property type="protein sequence ID" value="CAP74382.1"/>
    <property type="molecule type" value="Genomic_DNA"/>
</dbReference>
<dbReference type="SMR" id="B4ESA3"/>
<dbReference type="MEROPS" id="I02.031"/>
<dbReference type="GO" id="GO:0005615">
    <property type="term" value="C:extracellular space"/>
    <property type="evidence" value="ECO:0007669"/>
    <property type="project" value="TreeGrafter"/>
</dbReference>
<dbReference type="GO" id="GO:0004867">
    <property type="term" value="F:serine-type endopeptidase inhibitor activity"/>
    <property type="evidence" value="ECO:0007669"/>
    <property type="project" value="InterPro"/>
</dbReference>
<dbReference type="CDD" id="cd22594">
    <property type="entry name" value="Kunitz_textilinin-like"/>
    <property type="match status" value="1"/>
</dbReference>
<dbReference type="FunFam" id="4.10.410.10:FF:000021">
    <property type="entry name" value="Serine protease inhibitor, putative"/>
    <property type="match status" value="1"/>
</dbReference>
<dbReference type="Gene3D" id="4.10.410.10">
    <property type="entry name" value="Pancreatic trypsin inhibitor Kunitz domain"/>
    <property type="match status" value="1"/>
</dbReference>
<dbReference type="InterPro" id="IPR002223">
    <property type="entry name" value="Kunitz_BPTI"/>
</dbReference>
<dbReference type="InterPro" id="IPR036880">
    <property type="entry name" value="Kunitz_BPTI_sf"/>
</dbReference>
<dbReference type="InterPro" id="IPR020901">
    <property type="entry name" value="Prtase_inh_Kunz-CS"/>
</dbReference>
<dbReference type="InterPro" id="IPR050098">
    <property type="entry name" value="TFPI/VKTCI-like"/>
</dbReference>
<dbReference type="PANTHER" id="PTHR10083:SF374">
    <property type="entry name" value="BPTI_KUNITZ INHIBITOR DOMAIN-CONTAINING PROTEIN"/>
    <property type="match status" value="1"/>
</dbReference>
<dbReference type="PANTHER" id="PTHR10083">
    <property type="entry name" value="KUNITZ-TYPE PROTEASE INHIBITOR-RELATED"/>
    <property type="match status" value="1"/>
</dbReference>
<dbReference type="Pfam" id="PF00014">
    <property type="entry name" value="Kunitz_BPTI"/>
    <property type="match status" value="1"/>
</dbReference>
<dbReference type="PRINTS" id="PR00759">
    <property type="entry name" value="BASICPTASE"/>
</dbReference>
<dbReference type="SMART" id="SM00131">
    <property type="entry name" value="KU"/>
    <property type="match status" value="1"/>
</dbReference>
<dbReference type="SUPFAM" id="SSF57362">
    <property type="entry name" value="BPTI-like"/>
    <property type="match status" value="1"/>
</dbReference>
<dbReference type="PROSITE" id="PS00280">
    <property type="entry name" value="BPTI_KUNITZ_1"/>
    <property type="match status" value="1"/>
</dbReference>
<dbReference type="PROSITE" id="PS50279">
    <property type="entry name" value="BPTI_KUNITZ_2"/>
    <property type="match status" value="1"/>
</dbReference>
<reference key="1">
    <citation type="journal article" date="2008" name="Toxicon">
        <title>Genomic DNAs encoding Bungarus multicinctis protease inhibitor-like proteins.</title>
        <authorList>
            <person name="Chang L.-S."/>
            <person name="Wang J.-J."/>
            <person name="Cheng Y.-C."/>
            <person name="Chou W.-M."/>
        </authorList>
    </citation>
    <scope>NUCLEOTIDE SEQUENCE [GENOMIC DNA]</scope>
    <scope>FUNCTION</scope>
    <source>
        <tissue>Liver</tissue>
    </source>
</reference>
<reference key="2">
    <citation type="journal article" date="2010" name="Toxicon">
        <title>Structure-function studies on inhibitory activity of Bungarus multicinctus protease inhibitor-like protein on matrix metalloprotease-2, and invasion and migration of human neuroblastoma SK-N-SH cells.</title>
        <authorList>
            <person name="Chou W.M."/>
            <person name="Liu W.H."/>
            <person name="Chen K.C."/>
            <person name="Chang L.S."/>
        </authorList>
    </citation>
    <scope>FUNCTION</scope>
</reference>
<reference key="3">
    <citation type="journal article" date="2022" name="Br. J. Pharmacol.">
        <title>A new Kunitz-type snake toxin family associated with an original mode of interaction with the vasopressin 2 receptor.</title>
        <authorList>
            <person name="Droctove L."/>
            <person name="Ciolek J."/>
            <person name="Mendre C."/>
            <person name="Chorfa A."/>
            <person name="Huerta P."/>
            <person name="Carvalho C."/>
            <person name="Gouin C."/>
            <person name="Lancien M."/>
            <person name="Stanajic-Petrovic G."/>
            <person name="Braco L."/>
            <person name="Blanchet G."/>
            <person name="Upert G."/>
            <person name="De Pauw G."/>
            <person name="Barbe P."/>
            <person name="Keck M."/>
            <person name="Mourier G."/>
            <person name="Mouillac B."/>
            <person name="Denis S."/>
            <person name="Rodriguez de la Vega R.C."/>
            <person name="Quinton L."/>
            <person name="Gilles N."/>
        </authorList>
    </citation>
    <scope>SYNTHESIS</scope>
</reference>
<evidence type="ECO:0000250" key="1"/>
<evidence type="ECO:0000255" key="2">
    <source>
        <dbReference type="PROSITE-ProRule" id="PRU00031"/>
    </source>
</evidence>
<evidence type="ECO:0000269" key="3">
    <source>
    </source>
</evidence>
<evidence type="ECO:0000269" key="4">
    <source>
    </source>
</evidence>
<evidence type="ECO:0000269" key="5">
    <source>
    </source>
</evidence>
<evidence type="ECO:0000305" key="6"/>
<sequence length="83" mass="9158">MSSGGLLLLLGLLTLWMELTPVSSKNRPPFCNLLPEPGRCNAIVRAFYYNSRPRKCLEFPYGGCGGNANNFKTIEECQRTCAG</sequence>
<feature type="signal peptide" evidence="1">
    <location>
        <begin position="1"/>
        <end position="24"/>
    </location>
</feature>
<feature type="chain" id="PRO_5000388068" description="Kunitz-type serine protease inhibitor PILP-2">
    <location>
        <begin position="25"/>
        <end position="83"/>
    </location>
</feature>
<feature type="domain" description="BPTI/Kunitz inhibitor" evidence="2">
    <location>
        <begin position="31"/>
        <end position="81"/>
    </location>
</feature>
<feature type="site" description="Reactive bond for chymotrypsin" evidence="1">
    <location>
        <begin position="41"/>
        <end position="42"/>
    </location>
</feature>
<feature type="disulfide bond" evidence="2">
    <location>
        <begin position="31"/>
        <end position="81"/>
    </location>
</feature>
<feature type="disulfide bond" evidence="2">
    <location>
        <begin position="40"/>
        <end position="64"/>
    </location>
</feature>
<feature type="disulfide bond" evidence="2">
    <location>
        <begin position="56"/>
        <end position="77"/>
    </location>
</feature>
<accession>B4ESA3</accession>
<keyword id="KW-1015">Disulfide bond</keyword>
<keyword id="KW-0481">Metalloenzyme inhibitor</keyword>
<keyword id="KW-0483">Metalloprotease inhibitor</keyword>
<keyword id="KW-0646">Protease inhibitor</keyword>
<keyword id="KW-0964">Secreted</keyword>
<keyword id="KW-0732">Signal</keyword>
<organism>
    <name type="scientific">Bungarus multicinctus</name>
    <name type="common">Many-banded krait</name>
    <dbReference type="NCBI Taxonomy" id="8616"/>
    <lineage>
        <taxon>Eukaryota</taxon>
        <taxon>Metazoa</taxon>
        <taxon>Chordata</taxon>
        <taxon>Craniata</taxon>
        <taxon>Vertebrata</taxon>
        <taxon>Euteleostomi</taxon>
        <taxon>Lepidosauria</taxon>
        <taxon>Squamata</taxon>
        <taxon>Bifurcata</taxon>
        <taxon>Unidentata</taxon>
        <taxon>Episquamata</taxon>
        <taxon>Toxicofera</taxon>
        <taxon>Serpentes</taxon>
        <taxon>Colubroidea</taxon>
        <taxon>Elapidae</taxon>
        <taxon>Bungarinae</taxon>
        <taxon>Bungarus</taxon>
    </lineage>
</organism>
<protein>
    <recommendedName>
        <fullName>Kunitz-type serine protease inhibitor PILP-2</fullName>
    </recommendedName>
    <alternativeName>
        <fullName>Protease inhibitor-like protein 2</fullName>
    </alternativeName>
</protein>
<name>VKT2L_BUNMU</name>
<comment type="function">
    <text evidence="3 4">Shows weak binding and inhibition of MMP-2 and shows an activity in inhibiting migration and invasion of neuroblastoma.</text>
</comment>
<comment type="subcellular location">
    <subcellularLocation>
        <location evidence="1">Secreted</location>
    </subcellularLocation>
</comment>
<comment type="tissue specificity">
    <text>Expressed by the venom gland.</text>
</comment>
<comment type="miscellaneous">
    <text evidence="3 5">Negative results: does not inhibit chymotrypsin and trypsin (PubMed:18471842). Does not inhibit vasopressin V2 receptor (V2R/AVPR2) (PubMed:35122240).</text>
</comment>
<comment type="similarity">
    <text evidence="6">Belongs to the venom Kunitz-type family.</text>
</comment>